<feature type="chain" id="PRO_0000434399" description="Cytochrome P450 86A22">
    <location>
        <begin position="1"/>
        <end position="553"/>
    </location>
</feature>
<feature type="transmembrane region" description="Helical" evidence="2">
    <location>
        <begin position="8"/>
        <end position="24"/>
    </location>
</feature>
<feature type="binding site" description="axial binding residue" evidence="1">
    <location>
        <position position="459"/>
    </location>
    <ligand>
        <name>heme</name>
        <dbReference type="ChEBI" id="CHEBI:30413"/>
    </ligand>
    <ligandPart>
        <name>Fe</name>
        <dbReference type="ChEBI" id="CHEBI:18248"/>
    </ligandPart>
</feature>
<name>86A22_PETHY</name>
<comment type="function">
    <text evidence="4">Fatty acyl-CoA omega-hydroxylase essential for the production of omega-hydroxy fatty acids and the biosynthesis of triacylglycerol-/diacylglycerol-based estolide polyesters in the stigma. Substrate preference is 16:0-CoA &gt; 18:1-CoA &gt; 18:0-CoA.</text>
</comment>
<comment type="catalytic activity">
    <reaction evidence="4">
        <text>(9Z)-octadecenoyl-CoA + reduced [NADPH--hemoprotein reductase] + O2 = (9Z)-18-hydroxyoctadecenoyl-CoA + oxidized [NADPH--hemoprotein reductase] + H2O + H(+)</text>
        <dbReference type="Rhea" id="RHEA:45072"/>
        <dbReference type="Rhea" id="RHEA-COMP:11964"/>
        <dbReference type="Rhea" id="RHEA-COMP:11965"/>
        <dbReference type="ChEBI" id="CHEBI:15377"/>
        <dbReference type="ChEBI" id="CHEBI:15378"/>
        <dbReference type="ChEBI" id="CHEBI:15379"/>
        <dbReference type="ChEBI" id="CHEBI:57387"/>
        <dbReference type="ChEBI" id="CHEBI:57618"/>
        <dbReference type="ChEBI" id="CHEBI:58210"/>
        <dbReference type="ChEBI" id="CHEBI:86044"/>
        <dbReference type="EC" id="1.14.14.129"/>
    </reaction>
</comment>
<comment type="catalytic activity">
    <reaction evidence="4">
        <text>(9Z,12Z)-octadecadienoyl-CoA + reduced [NADPH--hemoprotein reductase] + O2 = (9Z,12Z)-18-hydroxyoctadecadienoyl-CoA + oxidized [NADPH--hemoprotein reductase] + H2O + H(+)</text>
        <dbReference type="Rhea" id="RHEA:45076"/>
        <dbReference type="Rhea" id="RHEA-COMP:11964"/>
        <dbReference type="Rhea" id="RHEA-COMP:11965"/>
        <dbReference type="ChEBI" id="CHEBI:15377"/>
        <dbReference type="ChEBI" id="CHEBI:15378"/>
        <dbReference type="ChEBI" id="CHEBI:15379"/>
        <dbReference type="ChEBI" id="CHEBI:57383"/>
        <dbReference type="ChEBI" id="CHEBI:57618"/>
        <dbReference type="ChEBI" id="CHEBI:58210"/>
        <dbReference type="ChEBI" id="CHEBI:84904"/>
        <dbReference type="EC" id="1.14.14.129"/>
    </reaction>
</comment>
<comment type="cofactor">
    <cofactor evidence="1">
        <name>heme</name>
        <dbReference type="ChEBI" id="CHEBI:30413"/>
    </cofactor>
</comment>
<comment type="subcellular location">
    <subcellularLocation>
        <location evidence="6">Membrane</location>
        <topology evidence="6">Single-pass membrane protein</topology>
    </subcellularLocation>
</comment>
<comment type="tissue specificity">
    <text evidence="4">Mostly expressed in the developing stigma of floral buds. Weakly detected in leaves, stems and flowers.</text>
</comment>
<comment type="similarity">
    <text evidence="3">Belongs to the cytochrome P450 family.</text>
</comment>
<organism evidence="7">
    <name type="scientific">Petunia hybrida</name>
    <name type="common">Petunia</name>
    <dbReference type="NCBI Taxonomy" id="4102"/>
    <lineage>
        <taxon>Eukaryota</taxon>
        <taxon>Viridiplantae</taxon>
        <taxon>Streptophyta</taxon>
        <taxon>Embryophyta</taxon>
        <taxon>Tracheophyta</taxon>
        <taxon>Spermatophyta</taxon>
        <taxon>Magnoliopsida</taxon>
        <taxon>eudicotyledons</taxon>
        <taxon>Gunneridae</taxon>
        <taxon>Pentapetalae</taxon>
        <taxon>asterids</taxon>
        <taxon>lamiids</taxon>
        <taxon>Solanales</taxon>
        <taxon>Solanaceae</taxon>
        <taxon>Petunioideae</taxon>
        <taxon>Petunia</taxon>
    </lineage>
</organism>
<sequence length="553" mass="62504">MEVSTTMMIVAIVAAYLLWFKSITKSMKGPKGPTMWPVVGSLPGLIENGNRMHEWIADNLRACSGTYQTCICAIPFLARKQLVTVTCDPKNLEHILKVRFDNYPKGPTWQAVFHDLLGEGIFNSDGDTWLFQRKTAALEFTTRTLRQAMGRWVNRAIKNRFCPILEMAQVQGKPVDLQDLLLRLTFDNICGLAFGKDPETLSPELPENNFATSFDRATEATLHRFIMPEFVWKLKKMLGLGLEVSLNNSLKQVDNYMTDVINTRKLELLNHQNGGPQHDDLLSRFMKKKESYSDKFLQHVALNFILAGRDTSSVALSWFFWLVSSNPRVEEKILVEICTILAETRGNDTSKWLEEPLVFEEVDQLMYLKAALSETLRLYPSVPEDSKHVISDDYLPDGTFVPAGSNITYSIYSTGRMKFIWGEDCLEFKPERWMSQDGDKFQVQDTFRFVAFNAGPRICLGKDLAYLQMKSIAAAVLLRHRLAVAPGHKVEQKMSLTLFMKDGLVMNVTPRDLTPILAKIEKFGKVESCAGEHHLINNGIHQPGSIAVNGIAA</sequence>
<protein>
    <recommendedName>
        <fullName evidence="5">Cytochrome P450 86A22</fullName>
        <ecNumber evidence="4">1.14.14.129</ecNumber>
    </recommendedName>
    <alternativeName>
        <fullName evidence="6">Long-chain acyl-CoA omega-monooxygenase</fullName>
    </alternativeName>
</protein>
<keyword id="KW-0349">Heme</keyword>
<keyword id="KW-0408">Iron</keyword>
<keyword id="KW-0472">Membrane</keyword>
<keyword id="KW-0479">Metal-binding</keyword>
<keyword id="KW-0503">Monooxygenase</keyword>
<keyword id="KW-0560">Oxidoreductase</keyword>
<keyword id="KW-0812">Transmembrane</keyword>
<keyword id="KW-1133">Transmembrane helix</keyword>
<accession>B3RFJ6</accession>
<dbReference type="EC" id="1.14.14.129" evidence="4"/>
<dbReference type="EMBL" id="DQ099538">
    <property type="protein sequence ID" value="AAZ39642.1"/>
    <property type="molecule type" value="mRNA"/>
</dbReference>
<dbReference type="SMR" id="B3RFJ6"/>
<dbReference type="KEGG" id="ag:AAZ39642"/>
<dbReference type="BioCyc" id="MetaCyc:MONOMER-15481"/>
<dbReference type="BRENDA" id="1.14.14.129">
    <property type="organism ID" value="4700"/>
</dbReference>
<dbReference type="GO" id="GO:0016020">
    <property type="term" value="C:membrane"/>
    <property type="evidence" value="ECO:0007669"/>
    <property type="project" value="UniProtKB-SubCell"/>
</dbReference>
<dbReference type="GO" id="GO:0020037">
    <property type="term" value="F:heme binding"/>
    <property type="evidence" value="ECO:0007669"/>
    <property type="project" value="InterPro"/>
</dbReference>
<dbReference type="GO" id="GO:0005506">
    <property type="term" value="F:iron ion binding"/>
    <property type="evidence" value="ECO:0007669"/>
    <property type="project" value="InterPro"/>
</dbReference>
<dbReference type="GO" id="GO:0016709">
    <property type="term" value="F:oxidoreductase activity, acting on paired donors, with incorporation or reduction of molecular oxygen, NAD(P)H as one donor, and incorporation of one atom of oxygen"/>
    <property type="evidence" value="ECO:0000314"/>
    <property type="project" value="UniProtKB"/>
</dbReference>
<dbReference type="GO" id="GO:0035336">
    <property type="term" value="P:long-chain fatty-acyl-CoA metabolic process"/>
    <property type="evidence" value="ECO:0000314"/>
    <property type="project" value="UniProtKB"/>
</dbReference>
<dbReference type="CDD" id="cd11064">
    <property type="entry name" value="CYP86A"/>
    <property type="match status" value="1"/>
</dbReference>
<dbReference type="FunFam" id="1.10.630.10:FF:000044">
    <property type="entry name" value="Cytochrome P450"/>
    <property type="match status" value="1"/>
</dbReference>
<dbReference type="Gene3D" id="1.10.630.10">
    <property type="entry name" value="Cytochrome P450"/>
    <property type="match status" value="1"/>
</dbReference>
<dbReference type="InterPro" id="IPR001128">
    <property type="entry name" value="Cyt_P450"/>
</dbReference>
<dbReference type="InterPro" id="IPR017972">
    <property type="entry name" value="Cyt_P450_CS"/>
</dbReference>
<dbReference type="InterPro" id="IPR002401">
    <property type="entry name" value="Cyt_P450_E_grp-I"/>
</dbReference>
<dbReference type="InterPro" id="IPR036396">
    <property type="entry name" value="Cyt_P450_sf"/>
</dbReference>
<dbReference type="PANTHER" id="PTHR24296">
    <property type="entry name" value="CYTOCHROME P450"/>
    <property type="match status" value="1"/>
</dbReference>
<dbReference type="Pfam" id="PF00067">
    <property type="entry name" value="p450"/>
    <property type="match status" value="1"/>
</dbReference>
<dbReference type="PRINTS" id="PR00463">
    <property type="entry name" value="EP450I"/>
</dbReference>
<dbReference type="PRINTS" id="PR00385">
    <property type="entry name" value="P450"/>
</dbReference>
<dbReference type="SUPFAM" id="SSF48264">
    <property type="entry name" value="Cytochrome P450"/>
    <property type="match status" value="1"/>
</dbReference>
<dbReference type="PROSITE" id="PS00086">
    <property type="entry name" value="CYTOCHROME_P450"/>
    <property type="match status" value="1"/>
</dbReference>
<reference key="1">
    <citation type="journal article" date="2010" name="J. Biol. Chem.">
        <title>The cytochrome P450 CYP86A22 is a fatty acyl-CoA omega-hydroxylase essential for Estolide synthesis in the stigma of Petunia hybrida.</title>
        <authorList>
            <person name="Han J."/>
            <person name="Clement J.M."/>
            <person name="Li J."/>
            <person name="King A."/>
            <person name="Ng S."/>
            <person name="Jaworski J.G."/>
        </authorList>
    </citation>
    <scope>NUCLEOTIDE SEQUENCE [MRNA]</scope>
    <scope>FUNCTION</scope>
    <scope>CATALYTIC ACTIVITY</scope>
    <scope>TISSUE SPECIFICITY</scope>
    <scope>SUBSTRATE SPECIFICITY</scope>
</reference>
<evidence type="ECO:0000250" key="1">
    <source>
        <dbReference type="UniProtKB" id="P04798"/>
    </source>
</evidence>
<evidence type="ECO:0000255" key="2"/>
<evidence type="ECO:0000255" key="3">
    <source>
        <dbReference type="RuleBase" id="RU000461"/>
    </source>
</evidence>
<evidence type="ECO:0000269" key="4">
    <source>
    </source>
</evidence>
<evidence type="ECO:0000303" key="5">
    <source>
    </source>
</evidence>
<evidence type="ECO:0000305" key="6"/>
<evidence type="ECO:0000312" key="7">
    <source>
        <dbReference type="EMBL" id="AAZ39642.1"/>
    </source>
</evidence>
<proteinExistence type="evidence at protein level"/>
<gene>
    <name evidence="5" type="primary">CYP86A22</name>
</gene>